<proteinExistence type="evidence at protein level"/>
<name>ASCA5_ASCTR</name>
<protein>
    <recommendedName>
        <fullName>Ascaphin-5</fullName>
    </recommendedName>
</protein>
<dbReference type="GO" id="GO:0005576">
    <property type="term" value="C:extracellular region"/>
    <property type="evidence" value="ECO:0000314"/>
    <property type="project" value="UniProtKB"/>
</dbReference>
<dbReference type="GO" id="GO:0050829">
    <property type="term" value="P:defense response to Gram-negative bacterium"/>
    <property type="evidence" value="ECO:0000314"/>
    <property type="project" value="UniProtKB"/>
</dbReference>
<keyword id="KW-0878">Amphibian defense peptide</keyword>
<keyword id="KW-0044">Antibiotic</keyword>
<keyword id="KW-0929">Antimicrobial</keyword>
<keyword id="KW-0903">Direct protein sequencing</keyword>
<keyword id="KW-0964">Secreted</keyword>
<reference key="1">
    <citation type="journal article" date="2004" name="Biochem. Biophys. Res. Commun.">
        <title>The ascaphins: a family of antimicrobial peptides from the skin secretions of the most primitive extant frog, Ascaphus truei.</title>
        <authorList>
            <person name="Conlon J.M."/>
            <person name="Sonnevend A."/>
            <person name="Davidson C."/>
            <person name="Smith D.D."/>
            <person name="Nielsen P.F."/>
        </authorList>
    </citation>
    <scope>PROTEIN SEQUENCE</scope>
    <scope>FUNCTION</scope>
    <scope>MASS SPECTROMETRY</scope>
    <scope>SYNTHESIS</scope>
    <source>
        <tissue>Skin secretion</tissue>
    </source>
</reference>
<organism>
    <name type="scientific">Ascaphus truei</name>
    <name type="common">Coastal tailed frog</name>
    <dbReference type="NCBI Taxonomy" id="8439"/>
    <lineage>
        <taxon>Eukaryota</taxon>
        <taxon>Metazoa</taxon>
        <taxon>Chordata</taxon>
        <taxon>Craniata</taxon>
        <taxon>Vertebrata</taxon>
        <taxon>Euteleostomi</taxon>
        <taxon>Amphibia</taxon>
        <taxon>Batrachia</taxon>
        <taxon>Anura</taxon>
        <taxon>Ascaphidae</taxon>
        <taxon>Ascaphus</taxon>
    </lineage>
</organism>
<feature type="peptide" id="PRO_0000406132" description="Ascaphin-5">
    <location>
        <begin position="1"/>
        <end position="24"/>
    </location>
</feature>
<comment type="function">
    <text evidence="1">Antimicrobial peptide. Synthetic peptide shows higher potency against Gram-negative bacteria than against Gram-positive bacteria. Has a very week hemolytic activity.</text>
</comment>
<comment type="subcellular location">
    <subcellularLocation>
        <location>Secreted</location>
    </subcellularLocation>
</comment>
<comment type="tissue specificity">
    <text>Expressed by the skin glands.</text>
</comment>
<comment type="mass spectrometry" mass="2589.6" method="MALDI" evidence="1"/>
<comment type="similarity">
    <text evidence="2">Belongs to the ascaphin family.</text>
</comment>
<accession>P0CJ29</accession>
<evidence type="ECO:0000269" key="1">
    <source>
    </source>
</evidence>
<evidence type="ECO:0000305" key="2"/>
<sequence length="24" mass="2591">GIKDWIKGAAKKLIKTVASHIANQ</sequence>